<evidence type="ECO:0000255" key="1">
    <source>
        <dbReference type="HAMAP-Rule" id="MF_00179"/>
    </source>
</evidence>
<sequence>MSVVFVAASKLPTPFGEFTMHGFLDEESGKEHVALSMGDIADGAPVLGRLHSECLTGDALFSLRCDCGFQLEGALAAIAEEGRGVLLYLRQEGRGIGLLNKIRAYELQDGGADTVEANLQLGFGADQRDYAMCQPMLAHLGVSSLRLMTNNPRKVKALESYAITVAERVPLQRGLNKHNRRYLATKAGKLGHMLGSLHQGEAETT</sequence>
<organism>
    <name type="scientific">Pseudomonas aeruginosa (strain UCBPP-PA14)</name>
    <dbReference type="NCBI Taxonomy" id="208963"/>
    <lineage>
        <taxon>Bacteria</taxon>
        <taxon>Pseudomonadati</taxon>
        <taxon>Pseudomonadota</taxon>
        <taxon>Gammaproteobacteria</taxon>
        <taxon>Pseudomonadales</taxon>
        <taxon>Pseudomonadaceae</taxon>
        <taxon>Pseudomonas</taxon>
    </lineage>
</organism>
<proteinExistence type="inferred from homology"/>
<feature type="chain" id="PRO_1000040573" description="GTP cyclohydrolase-2">
    <location>
        <begin position="1"/>
        <end position="205"/>
    </location>
</feature>
<feature type="active site" description="Proton acceptor" evidence="1">
    <location>
        <position position="126"/>
    </location>
</feature>
<feature type="active site" description="Nucleophile" evidence="1">
    <location>
        <position position="128"/>
    </location>
</feature>
<feature type="binding site" evidence="1">
    <location>
        <begin position="49"/>
        <end position="53"/>
    </location>
    <ligand>
        <name>GTP</name>
        <dbReference type="ChEBI" id="CHEBI:37565"/>
    </ligand>
</feature>
<feature type="binding site" evidence="1">
    <location>
        <position position="54"/>
    </location>
    <ligand>
        <name>Zn(2+)</name>
        <dbReference type="ChEBI" id="CHEBI:29105"/>
        <note>catalytic</note>
    </ligand>
</feature>
<feature type="binding site" evidence="1">
    <location>
        <position position="65"/>
    </location>
    <ligand>
        <name>Zn(2+)</name>
        <dbReference type="ChEBI" id="CHEBI:29105"/>
        <note>catalytic</note>
    </ligand>
</feature>
<feature type="binding site" evidence="1">
    <location>
        <position position="67"/>
    </location>
    <ligand>
        <name>Zn(2+)</name>
        <dbReference type="ChEBI" id="CHEBI:29105"/>
        <note>catalytic</note>
    </ligand>
</feature>
<feature type="binding site" evidence="1">
    <location>
        <position position="70"/>
    </location>
    <ligand>
        <name>GTP</name>
        <dbReference type="ChEBI" id="CHEBI:37565"/>
    </ligand>
</feature>
<feature type="binding site" evidence="1">
    <location>
        <begin position="92"/>
        <end position="94"/>
    </location>
    <ligand>
        <name>GTP</name>
        <dbReference type="ChEBI" id="CHEBI:37565"/>
    </ligand>
</feature>
<feature type="binding site" evidence="1">
    <location>
        <position position="114"/>
    </location>
    <ligand>
        <name>GTP</name>
        <dbReference type="ChEBI" id="CHEBI:37565"/>
    </ligand>
</feature>
<feature type="binding site" evidence="1">
    <location>
        <position position="149"/>
    </location>
    <ligand>
        <name>GTP</name>
        <dbReference type="ChEBI" id="CHEBI:37565"/>
    </ligand>
</feature>
<feature type="binding site" evidence="1">
    <location>
        <position position="154"/>
    </location>
    <ligand>
        <name>GTP</name>
        <dbReference type="ChEBI" id="CHEBI:37565"/>
    </ligand>
</feature>
<reference key="1">
    <citation type="journal article" date="2006" name="Genome Biol.">
        <title>Genomic analysis reveals that Pseudomonas aeruginosa virulence is combinatorial.</title>
        <authorList>
            <person name="Lee D.G."/>
            <person name="Urbach J.M."/>
            <person name="Wu G."/>
            <person name="Liberati N.T."/>
            <person name="Feinbaum R.L."/>
            <person name="Miyata S."/>
            <person name="Diggins L.T."/>
            <person name="He J."/>
            <person name="Saucier M."/>
            <person name="Deziel E."/>
            <person name="Friedman L."/>
            <person name="Li L."/>
            <person name="Grills G."/>
            <person name="Montgomery K."/>
            <person name="Kucherlapati R."/>
            <person name="Rahme L.G."/>
            <person name="Ausubel F.M."/>
        </authorList>
    </citation>
    <scope>NUCLEOTIDE SEQUENCE [LARGE SCALE GENOMIC DNA]</scope>
    <source>
        <strain>UCBPP-PA14</strain>
    </source>
</reference>
<comment type="function">
    <text evidence="1">Catalyzes the conversion of GTP to 2,5-diamino-6-ribosylamino-4(3H)-pyrimidinone 5'-phosphate (DARP), formate and pyrophosphate.</text>
</comment>
<comment type="catalytic activity">
    <reaction evidence="1">
        <text>GTP + 4 H2O = 2,5-diamino-6-hydroxy-4-(5-phosphoribosylamino)-pyrimidine + formate + 2 phosphate + 3 H(+)</text>
        <dbReference type="Rhea" id="RHEA:23704"/>
        <dbReference type="ChEBI" id="CHEBI:15377"/>
        <dbReference type="ChEBI" id="CHEBI:15378"/>
        <dbReference type="ChEBI" id="CHEBI:15740"/>
        <dbReference type="ChEBI" id="CHEBI:37565"/>
        <dbReference type="ChEBI" id="CHEBI:43474"/>
        <dbReference type="ChEBI" id="CHEBI:58614"/>
        <dbReference type="EC" id="3.5.4.25"/>
    </reaction>
</comment>
<comment type="cofactor">
    <cofactor evidence="1">
        <name>Zn(2+)</name>
        <dbReference type="ChEBI" id="CHEBI:29105"/>
    </cofactor>
    <text evidence="1">Binds 1 zinc ion per subunit.</text>
</comment>
<comment type="pathway">
    <text evidence="1">Cofactor biosynthesis; riboflavin biosynthesis; 5-amino-6-(D-ribitylamino)uracil from GTP: step 1/4.</text>
</comment>
<comment type="similarity">
    <text evidence="1">Belongs to the GTP cyclohydrolase II family.</text>
</comment>
<keyword id="KW-0342">GTP-binding</keyword>
<keyword id="KW-0378">Hydrolase</keyword>
<keyword id="KW-0479">Metal-binding</keyword>
<keyword id="KW-0547">Nucleotide-binding</keyword>
<keyword id="KW-0686">Riboflavin biosynthesis</keyword>
<keyword id="KW-0862">Zinc</keyword>
<dbReference type="EC" id="3.5.4.25" evidence="1"/>
<dbReference type="EMBL" id="CP000438">
    <property type="protein sequence ID" value="ABJ13320.1"/>
    <property type="molecule type" value="Genomic_DNA"/>
</dbReference>
<dbReference type="RefSeq" id="WP_003093299.1">
    <property type="nucleotide sequence ID" value="NZ_CP034244.1"/>
</dbReference>
<dbReference type="SMR" id="Q02SL4"/>
<dbReference type="KEGG" id="pau:PA14_11510"/>
<dbReference type="PseudoCAP" id="PA14_11510"/>
<dbReference type="HOGENOM" id="CLU_020273_2_1_6"/>
<dbReference type="BioCyc" id="PAER208963:G1G74-957-MONOMER"/>
<dbReference type="UniPathway" id="UPA00275">
    <property type="reaction ID" value="UER00400"/>
</dbReference>
<dbReference type="Proteomes" id="UP000000653">
    <property type="component" value="Chromosome"/>
</dbReference>
<dbReference type="GO" id="GO:0005829">
    <property type="term" value="C:cytosol"/>
    <property type="evidence" value="ECO:0007669"/>
    <property type="project" value="TreeGrafter"/>
</dbReference>
<dbReference type="GO" id="GO:0005525">
    <property type="term" value="F:GTP binding"/>
    <property type="evidence" value="ECO:0007669"/>
    <property type="project" value="UniProtKB-KW"/>
</dbReference>
<dbReference type="GO" id="GO:0003935">
    <property type="term" value="F:GTP cyclohydrolase II activity"/>
    <property type="evidence" value="ECO:0007669"/>
    <property type="project" value="UniProtKB-UniRule"/>
</dbReference>
<dbReference type="GO" id="GO:0008270">
    <property type="term" value="F:zinc ion binding"/>
    <property type="evidence" value="ECO:0007669"/>
    <property type="project" value="UniProtKB-UniRule"/>
</dbReference>
<dbReference type="GO" id="GO:0009231">
    <property type="term" value="P:riboflavin biosynthetic process"/>
    <property type="evidence" value="ECO:0007669"/>
    <property type="project" value="UniProtKB-UniRule"/>
</dbReference>
<dbReference type="CDD" id="cd00641">
    <property type="entry name" value="GTP_cyclohydro2"/>
    <property type="match status" value="1"/>
</dbReference>
<dbReference type="FunFam" id="3.40.50.10990:FF:000002">
    <property type="entry name" value="GTP cyclohydrolase-2"/>
    <property type="match status" value="1"/>
</dbReference>
<dbReference type="Gene3D" id="3.40.50.10990">
    <property type="entry name" value="GTP cyclohydrolase II"/>
    <property type="match status" value="1"/>
</dbReference>
<dbReference type="HAMAP" id="MF_00179">
    <property type="entry name" value="RibA"/>
    <property type="match status" value="1"/>
</dbReference>
<dbReference type="InterPro" id="IPR032677">
    <property type="entry name" value="GTP_cyclohydro_II"/>
</dbReference>
<dbReference type="InterPro" id="IPR000926">
    <property type="entry name" value="RibA"/>
</dbReference>
<dbReference type="InterPro" id="IPR036144">
    <property type="entry name" value="RibA-like_sf"/>
</dbReference>
<dbReference type="NCBIfam" id="NF001591">
    <property type="entry name" value="PRK00393.1"/>
    <property type="match status" value="1"/>
</dbReference>
<dbReference type="NCBIfam" id="TIGR00505">
    <property type="entry name" value="ribA"/>
    <property type="match status" value="1"/>
</dbReference>
<dbReference type="PANTHER" id="PTHR21327:SF18">
    <property type="entry name" value="3,4-DIHYDROXY-2-BUTANONE 4-PHOSPHATE SYNTHASE"/>
    <property type="match status" value="1"/>
</dbReference>
<dbReference type="PANTHER" id="PTHR21327">
    <property type="entry name" value="GTP CYCLOHYDROLASE II-RELATED"/>
    <property type="match status" value="1"/>
</dbReference>
<dbReference type="Pfam" id="PF00925">
    <property type="entry name" value="GTP_cyclohydro2"/>
    <property type="match status" value="1"/>
</dbReference>
<dbReference type="SUPFAM" id="SSF142695">
    <property type="entry name" value="RibA-like"/>
    <property type="match status" value="1"/>
</dbReference>
<accession>Q02SL4</accession>
<name>RIBA_PSEAB</name>
<gene>
    <name evidence="1" type="primary">ribA</name>
    <name type="ordered locus">PA14_11510</name>
</gene>
<protein>
    <recommendedName>
        <fullName evidence="1">GTP cyclohydrolase-2</fullName>
        <ecNumber evidence="1">3.5.4.25</ecNumber>
    </recommendedName>
    <alternativeName>
        <fullName evidence="1">GTP cyclohydrolase II</fullName>
    </alternativeName>
</protein>